<protein>
    <recommendedName>
        <fullName evidence="2">Amyloid-beta precursor protein</fullName>
    </recommendedName>
    <alternativeName>
        <fullName>ABPP</fullName>
        <shortName>APP</shortName>
    </alternativeName>
    <alternativeName>
        <fullName>Alzheimer disease amyloid A4 protein homolog</fullName>
    </alternativeName>
    <alternativeName>
        <fullName>Alzheimer disease amyloid protein</fullName>
    </alternativeName>
    <alternativeName>
        <fullName evidence="13">Amyloid precursor protein</fullName>
    </alternativeName>
    <alternativeName>
        <fullName evidence="3">Amyloid-beta (A4) precursor protein</fullName>
    </alternativeName>
    <alternativeName>
        <fullName evidence="3">Amyloid-beta A4 protein</fullName>
    </alternativeName>
    <component>
        <recommendedName>
            <fullName>N-APP</fullName>
        </recommendedName>
    </component>
    <component>
        <recommendedName>
            <fullName>Soluble APP-alpha</fullName>
            <shortName>S-APP-alpha</shortName>
        </recommendedName>
    </component>
    <component>
        <recommendedName>
            <fullName>Soluble APP-beta</fullName>
            <shortName>S-APP-beta</shortName>
        </recommendedName>
    </component>
    <component>
        <recommendedName>
            <fullName>C99</fullName>
        </recommendedName>
        <alternativeName>
            <fullName>Beta-secretase C-terminal fragment</fullName>
            <shortName>Beta-CTF</shortName>
        </alternativeName>
        <alternativeName>
            <fullName>CTF-beta</fullName>
        </alternativeName>
    </component>
    <component>
        <recommendedName>
            <fullName>Amyloid-beta protein 42</fullName>
            <shortName>Abeta42</shortName>
        </recommendedName>
        <alternativeName>
            <fullName>Beta-APP42</fullName>
        </alternativeName>
    </component>
    <component>
        <recommendedName>
            <fullName>Amyloid-beta protein 40</fullName>
            <shortName>Abeta40</shortName>
        </recommendedName>
        <alternativeName>
            <fullName>Beta-APP40</fullName>
        </alternativeName>
    </component>
    <component>
        <recommendedName>
            <fullName>C83</fullName>
        </recommendedName>
        <alternativeName>
            <fullName>Alpha-secretase C-terminal fragment</fullName>
            <shortName>Alpha-CTF</shortName>
        </alternativeName>
        <alternativeName>
            <fullName>CTF-alpha</fullName>
        </alternativeName>
    </component>
    <component>
        <recommendedName>
            <fullName>P3(42)</fullName>
        </recommendedName>
    </component>
    <component>
        <recommendedName>
            <fullName>P3(40)</fullName>
        </recommendedName>
    </component>
    <component>
        <recommendedName>
            <fullName>C80</fullName>
        </recommendedName>
    </component>
    <component>
        <recommendedName>
            <fullName>Gamma-secretase C-terminal fragment 59</fullName>
        </recommendedName>
        <alternativeName>
            <fullName>Gamma-CTF(59)</fullName>
        </alternativeName>
    </component>
    <component>
        <recommendedName>
            <fullName>Gamma-secretase C-terminal fragment 57</fullName>
        </recommendedName>
        <alternativeName>
            <fullName>Gamma-CTF(57)</fullName>
        </alternativeName>
    </component>
    <component>
        <recommendedName>
            <fullName>Gamma-secretase C-terminal fragment 50</fullName>
        </recommendedName>
        <alternativeName>
            <fullName>Amyloid intracellular domain 50</fullName>
            <shortName>AICD-50</shortName>
            <shortName>AID(50)</shortName>
        </alternativeName>
        <alternativeName>
            <fullName>Gamma-CTF(50)</fullName>
        </alternativeName>
    </component>
    <component>
        <recommendedName>
            <fullName>C31</fullName>
        </recommendedName>
    </component>
</protein>
<reference key="1">
    <citation type="journal article" date="1997" name="Biochim. Biophys. Acta">
        <title>Amyloid precursor protein in Guinea pigs -- complete cDNA sequence and alternative splicing.</title>
        <authorList>
            <person name="Beck M."/>
            <person name="Mueller D."/>
            <person name="Bigl V."/>
        </authorList>
    </citation>
    <scope>NUCLEOTIDE SEQUENCE [MRNA]</scope>
    <scope>ALTERNATIVE SPLICING</scope>
    <source>
        <tissue>Brain</tissue>
        <tissue>Liver</tissue>
    </source>
</reference>
<reference key="2">
    <citation type="journal article" date="1997" name="J. Neurochem.">
        <title>Isoform-specific effects of apolipoproteins E2, E3, and E4 on cerebral capillary sequestration and blood-brain barrier transport of circulating Alzheimer's amyloid beta.</title>
        <authorList>
            <person name="Martel C.L."/>
            <person name="Mackic J.B."/>
            <person name="Matsubara E."/>
            <person name="Governale S."/>
            <person name="Miguel C."/>
            <person name="Miao W."/>
            <person name="McComb J.G."/>
            <person name="Frangione B."/>
            <person name="Ghiso J."/>
            <person name="Zlokovic B.V."/>
        </authorList>
    </citation>
    <scope>INTERACTION OF APP40-BETA WITH APOE</scope>
</reference>
<reference key="3">
    <citation type="journal article" date="2000" name="Neuroscience">
        <title>Guinea-pig primary cell cultures provide a model to study expression and amyloidogenic processing of endogenous amyloid precursor protein.</title>
        <authorList>
            <person name="Beck M."/>
            <person name="Brueckner M.K."/>
            <person name="Holzer M."/>
            <person name="Kaap S."/>
            <person name="Pannicke T."/>
            <person name="Arendt T."/>
            <person name="Bigl V."/>
        </authorList>
    </citation>
    <scope>PROTEOLYTIC PROCESSING</scope>
</reference>
<reference key="4">
    <citation type="journal article" date="2001" name="J. Biol. Chem.">
        <title>A novel gamma-secretase assay based on detection of the putative C-terminal fragment-gamma of amyloid beta protein precursor.</title>
        <authorList>
            <person name="Pinnix I."/>
            <person name="Musunuru U."/>
            <person name="Tun H."/>
            <person name="Sridharan A."/>
            <person name="Golde T."/>
            <person name="Eckman C."/>
            <person name="Ziani-Cherif C."/>
            <person name="Onstead L."/>
            <person name="Sambamurti K."/>
        </authorList>
    </citation>
    <scope>PROTEOLYTIC PROCESSING BY GAMMA-SECRETASE</scope>
</reference>
<sequence length="770" mass="86883">MLPSLALLLLTTWTARALEVPTDGNAGLLAEPQIAMFCGKLNMHMNVQNGKWEPDPSGTKTCIGSKEGILQYCQEVYPELQITNVVEANQPVTIQNWCKRSRKQCKTHPHFVIPYRCLVGEFVSDALLVPDKCKFLHQERMDVCETHLHWHTVAKETCSEKSTNLHDYGMLLPCGIDKFRGVEFVCCPLAEESDNIDSADAEEDDSDVWWGGADTDYADGSEDKVVEVAEEEEVADVEEEEADDDEDVEDGDEVEEEAEEPYEEATEKTTSIATTTTTTTESVEEVVREVCSEQAETGPCRSMISRWYFDVTEGKCAPFFYGGCGGNRNNFDTEEYCMAVCGSVMSQNLLKTSGEPVSQGPVKLPTTAASTPDAVDKYLETPGDENEHAHFQKAKERLEAKHRERMSQVMREWEEAERQAKNLPKADKKAVIQHFQEKVESLEQEAANERQQLVETHMARVEAMLNDRRRLALENYITALQAVPPRPRHVFNMLKKYVRAEQKDRQHTLKHFEHVRMVDPKKAAQIRSQVMTHLRVIYERMNQSLSLLYNVPAVAEEIQDEVDELLQKEQNYSDDVLANMISEPRISYGNDALMPSLTETKTTVELLPVNGEFSLDDLQPWHPFGVDSVPANTENEVEPVDARPAADRGLTTRPGSGLTNIKTEEISEVKMDAEFRHDSGYEVHHQKLVFFAEDVGSNKGAIIGLMVGGVVIATVIVITLVMLKKKQYTSIHHGVVEVDAAVTPEERHLSKMQQNGYENPTYKFFEQMQN</sequence>
<proteinExistence type="evidence at protein level"/>
<dbReference type="EMBL" id="X97631">
    <property type="protein sequence ID" value="CAA66230.1"/>
    <property type="molecule type" value="mRNA"/>
</dbReference>
<dbReference type="EMBL" id="X99198">
    <property type="protein sequence ID" value="CAA67589.1"/>
    <property type="molecule type" value="mRNA"/>
</dbReference>
<dbReference type="SMR" id="Q60495"/>
<dbReference type="FunCoup" id="Q60495">
    <property type="interactions" value="1285"/>
</dbReference>
<dbReference type="STRING" id="10141.ENSCPOP00000020780"/>
<dbReference type="MEROPS" id="I02.015"/>
<dbReference type="GlyCosmos" id="Q60495">
    <property type="glycosylation" value="3 sites, No reported glycans"/>
</dbReference>
<dbReference type="eggNOG" id="KOG3540">
    <property type="taxonomic scope" value="Eukaryota"/>
</dbReference>
<dbReference type="InParanoid" id="Q60495"/>
<dbReference type="Proteomes" id="UP000005447">
    <property type="component" value="Unassembled WGS sequence"/>
</dbReference>
<dbReference type="GO" id="GO:0030424">
    <property type="term" value="C:axon"/>
    <property type="evidence" value="ECO:0000250"/>
    <property type="project" value="UniProtKB"/>
</dbReference>
<dbReference type="GO" id="GO:0009986">
    <property type="term" value="C:cell surface"/>
    <property type="evidence" value="ECO:0007669"/>
    <property type="project" value="UniProtKB-SubCell"/>
</dbReference>
<dbReference type="GO" id="GO:0005905">
    <property type="term" value="C:clathrin-coated pit"/>
    <property type="evidence" value="ECO:0007669"/>
    <property type="project" value="UniProtKB-SubCell"/>
</dbReference>
<dbReference type="GO" id="GO:0005737">
    <property type="term" value="C:cytoplasm"/>
    <property type="evidence" value="ECO:0000250"/>
    <property type="project" value="UniProtKB"/>
</dbReference>
<dbReference type="GO" id="GO:0005769">
    <property type="term" value="C:early endosome"/>
    <property type="evidence" value="ECO:0000250"/>
    <property type="project" value="UniProtKB"/>
</dbReference>
<dbReference type="GO" id="GO:0005783">
    <property type="term" value="C:endoplasmic reticulum"/>
    <property type="evidence" value="ECO:0000250"/>
    <property type="project" value="UniProtKB"/>
</dbReference>
<dbReference type="GO" id="GO:0005576">
    <property type="term" value="C:extracellular region"/>
    <property type="evidence" value="ECO:0007669"/>
    <property type="project" value="UniProtKB-SubCell"/>
</dbReference>
<dbReference type="GO" id="GO:0005794">
    <property type="term" value="C:Golgi apparatus"/>
    <property type="evidence" value="ECO:0000250"/>
    <property type="project" value="UniProtKB"/>
</dbReference>
<dbReference type="GO" id="GO:0005798">
    <property type="term" value="C:Golgi-associated vesicle"/>
    <property type="evidence" value="ECO:0000250"/>
    <property type="project" value="UniProtKB"/>
</dbReference>
<dbReference type="GO" id="GO:0030426">
    <property type="term" value="C:growth cone"/>
    <property type="evidence" value="ECO:0007669"/>
    <property type="project" value="UniProtKB-SubCell"/>
</dbReference>
<dbReference type="GO" id="GO:0016020">
    <property type="term" value="C:membrane"/>
    <property type="evidence" value="ECO:0000250"/>
    <property type="project" value="UniProtKB"/>
</dbReference>
<dbReference type="GO" id="GO:0045121">
    <property type="term" value="C:membrane raft"/>
    <property type="evidence" value="ECO:0007669"/>
    <property type="project" value="TreeGrafter"/>
</dbReference>
<dbReference type="GO" id="GO:0005634">
    <property type="term" value="C:nucleus"/>
    <property type="evidence" value="ECO:0007669"/>
    <property type="project" value="UniProtKB-SubCell"/>
</dbReference>
<dbReference type="GO" id="GO:0043204">
    <property type="term" value="C:perikaryon"/>
    <property type="evidence" value="ECO:0007669"/>
    <property type="project" value="UniProtKB-SubCell"/>
</dbReference>
<dbReference type="GO" id="GO:0005886">
    <property type="term" value="C:plasma membrane"/>
    <property type="evidence" value="ECO:0007669"/>
    <property type="project" value="UniProtKB-SubCell"/>
</dbReference>
<dbReference type="GO" id="GO:0055037">
    <property type="term" value="C:recycling endosome"/>
    <property type="evidence" value="ECO:0000250"/>
    <property type="project" value="UniProtKB"/>
</dbReference>
<dbReference type="GO" id="GO:0003677">
    <property type="term" value="F:DNA binding"/>
    <property type="evidence" value="ECO:0000250"/>
    <property type="project" value="UniProtKB"/>
</dbReference>
<dbReference type="GO" id="GO:0008201">
    <property type="term" value="F:heparin binding"/>
    <property type="evidence" value="ECO:0007669"/>
    <property type="project" value="UniProtKB-KW"/>
</dbReference>
<dbReference type="GO" id="GO:0004867">
    <property type="term" value="F:serine-type endopeptidase inhibitor activity"/>
    <property type="evidence" value="ECO:0007669"/>
    <property type="project" value="UniProtKB-KW"/>
</dbReference>
<dbReference type="GO" id="GO:0030546">
    <property type="term" value="F:signaling receptor activator activity"/>
    <property type="evidence" value="ECO:0007669"/>
    <property type="project" value="TreeGrafter"/>
</dbReference>
<dbReference type="GO" id="GO:0005102">
    <property type="term" value="F:signaling receptor binding"/>
    <property type="evidence" value="ECO:0007669"/>
    <property type="project" value="TreeGrafter"/>
</dbReference>
<dbReference type="GO" id="GO:0046914">
    <property type="term" value="F:transition metal ion binding"/>
    <property type="evidence" value="ECO:0007669"/>
    <property type="project" value="InterPro"/>
</dbReference>
<dbReference type="GO" id="GO:0008344">
    <property type="term" value="P:adult locomotory behavior"/>
    <property type="evidence" value="ECO:0000250"/>
    <property type="project" value="UniProtKB"/>
</dbReference>
<dbReference type="GO" id="GO:0006915">
    <property type="term" value="P:apoptotic process"/>
    <property type="evidence" value="ECO:0007669"/>
    <property type="project" value="UniProtKB-KW"/>
</dbReference>
<dbReference type="GO" id="GO:0008088">
    <property type="term" value="P:axo-dendritic transport"/>
    <property type="evidence" value="ECO:0000250"/>
    <property type="project" value="UniProtKB"/>
</dbReference>
<dbReference type="GO" id="GO:0016199">
    <property type="term" value="P:axon midline choice point recognition"/>
    <property type="evidence" value="ECO:0000250"/>
    <property type="project" value="UniProtKB"/>
</dbReference>
<dbReference type="GO" id="GO:0007409">
    <property type="term" value="P:axonogenesis"/>
    <property type="evidence" value="ECO:0000250"/>
    <property type="project" value="UniProtKB"/>
</dbReference>
<dbReference type="GO" id="GO:0007155">
    <property type="term" value="P:cell adhesion"/>
    <property type="evidence" value="ECO:0007669"/>
    <property type="project" value="UniProtKB-KW"/>
</dbReference>
<dbReference type="GO" id="GO:0007417">
    <property type="term" value="P:central nervous system development"/>
    <property type="evidence" value="ECO:0007669"/>
    <property type="project" value="TreeGrafter"/>
</dbReference>
<dbReference type="GO" id="GO:0050890">
    <property type="term" value="P:cognition"/>
    <property type="evidence" value="ECO:0000250"/>
    <property type="project" value="UniProtKB"/>
</dbReference>
<dbReference type="GO" id="GO:0048669">
    <property type="term" value="P:collateral sprouting in absence of injury"/>
    <property type="evidence" value="ECO:0000250"/>
    <property type="project" value="UniProtKB"/>
</dbReference>
<dbReference type="GO" id="GO:0016358">
    <property type="term" value="P:dendrite development"/>
    <property type="evidence" value="ECO:0000250"/>
    <property type="project" value="UniProtKB"/>
</dbReference>
<dbReference type="GO" id="GO:0006897">
    <property type="term" value="P:endocytosis"/>
    <property type="evidence" value="ECO:0000250"/>
    <property type="project" value="UniProtKB"/>
</dbReference>
<dbReference type="GO" id="GO:0030198">
    <property type="term" value="P:extracellular matrix organization"/>
    <property type="evidence" value="ECO:0000250"/>
    <property type="project" value="UniProtKB"/>
</dbReference>
<dbReference type="GO" id="GO:0006878">
    <property type="term" value="P:intracellular copper ion homeostasis"/>
    <property type="evidence" value="ECO:0000250"/>
    <property type="project" value="UniProtKB"/>
</dbReference>
<dbReference type="GO" id="GO:0035235">
    <property type="term" value="P:ionotropic glutamate receptor signaling pathway"/>
    <property type="evidence" value="ECO:0000250"/>
    <property type="project" value="UniProtKB"/>
</dbReference>
<dbReference type="GO" id="GO:0007626">
    <property type="term" value="P:locomotory behavior"/>
    <property type="evidence" value="ECO:0000250"/>
    <property type="project" value="UniProtKB"/>
</dbReference>
<dbReference type="GO" id="GO:0007617">
    <property type="term" value="P:mating behavior"/>
    <property type="evidence" value="ECO:0000250"/>
    <property type="project" value="UniProtKB"/>
</dbReference>
<dbReference type="GO" id="GO:0031175">
    <property type="term" value="P:neuron projection development"/>
    <property type="evidence" value="ECO:0000250"/>
    <property type="project" value="UniProtKB"/>
</dbReference>
<dbReference type="GO" id="GO:0016322">
    <property type="term" value="P:neuron remodeling"/>
    <property type="evidence" value="ECO:0000250"/>
    <property type="project" value="UniProtKB"/>
</dbReference>
<dbReference type="GO" id="GO:0007219">
    <property type="term" value="P:Notch signaling pathway"/>
    <property type="evidence" value="ECO:0007669"/>
    <property type="project" value="UniProtKB-KW"/>
</dbReference>
<dbReference type="GO" id="GO:0045931">
    <property type="term" value="P:positive regulation of mitotic cell cycle"/>
    <property type="evidence" value="ECO:0000250"/>
    <property type="project" value="UniProtKB"/>
</dbReference>
<dbReference type="GO" id="GO:0040014">
    <property type="term" value="P:regulation of multicellular organism growth"/>
    <property type="evidence" value="ECO:0000250"/>
    <property type="project" value="UniProtKB"/>
</dbReference>
<dbReference type="GO" id="GO:0050803">
    <property type="term" value="P:regulation of synapse structure or activity"/>
    <property type="evidence" value="ECO:0000250"/>
    <property type="project" value="UniProtKB"/>
</dbReference>
<dbReference type="GO" id="GO:0006417">
    <property type="term" value="P:regulation of translation"/>
    <property type="evidence" value="ECO:0000250"/>
    <property type="project" value="UniProtKB"/>
</dbReference>
<dbReference type="GO" id="GO:0008542">
    <property type="term" value="P:visual learning"/>
    <property type="evidence" value="ECO:0000250"/>
    <property type="project" value="UniProtKB"/>
</dbReference>
<dbReference type="CDD" id="cd22607">
    <property type="entry name" value="Kunitz_ABPP-like"/>
    <property type="match status" value="1"/>
</dbReference>
<dbReference type="FunFam" id="3.30.1490.140:FF:000001">
    <property type="entry name" value="Amyloid beta (A4) protein b"/>
    <property type="match status" value="1"/>
</dbReference>
<dbReference type="FunFam" id="3.90.570.10:FF:000001">
    <property type="entry name" value="Amyloid beta A4 protein"/>
    <property type="match status" value="1"/>
</dbReference>
<dbReference type="FunFam" id="4.10.230.10:FF:000001">
    <property type="entry name" value="Amyloid beta A4 protein"/>
    <property type="match status" value="1"/>
</dbReference>
<dbReference type="FunFam" id="4.10.410.10:FF:000001">
    <property type="entry name" value="Amyloid beta A4 protein"/>
    <property type="match status" value="1"/>
</dbReference>
<dbReference type="FunFam" id="1.20.120.770:FF:000001">
    <property type="entry name" value="Amyloid beta A4 protein-like isoform 1"/>
    <property type="match status" value="1"/>
</dbReference>
<dbReference type="Gene3D" id="1.20.120.770">
    <property type="entry name" value="Amyloid precursor protein, E2 domain"/>
    <property type="match status" value="1"/>
</dbReference>
<dbReference type="Gene3D" id="4.10.230.10">
    <property type="entry name" value="Amyloidogenic glycoprotein, amyloid-beta peptide"/>
    <property type="match status" value="1"/>
</dbReference>
<dbReference type="Gene3D" id="3.30.1490.140">
    <property type="entry name" value="Amyloidogenic glycoprotein, copper-binding domain"/>
    <property type="match status" value="1"/>
</dbReference>
<dbReference type="Gene3D" id="3.90.570.10">
    <property type="entry name" value="Amyloidogenic glycoprotein, heparin-binding domain"/>
    <property type="match status" value="1"/>
</dbReference>
<dbReference type="Gene3D" id="4.10.410.10">
    <property type="entry name" value="Pancreatic trypsin inhibitor Kunitz domain"/>
    <property type="match status" value="1"/>
</dbReference>
<dbReference type="Gene3D" id="2.30.29.30">
    <property type="entry name" value="Pleckstrin-homology domain (PH domain)/Phosphotyrosine-binding domain (PTB)"/>
    <property type="match status" value="1"/>
</dbReference>
<dbReference type="InterPro" id="IPR036669">
    <property type="entry name" value="Amyloid_Cu-bd_sf"/>
</dbReference>
<dbReference type="InterPro" id="IPR008155">
    <property type="entry name" value="Amyloid_glyco"/>
</dbReference>
<dbReference type="InterPro" id="IPR013803">
    <property type="entry name" value="Amyloid_glyco_Abeta"/>
</dbReference>
<dbReference type="InterPro" id="IPR037071">
    <property type="entry name" value="Amyloid_glyco_Abeta_sf"/>
</dbReference>
<dbReference type="InterPro" id="IPR011178">
    <property type="entry name" value="Amyloid_glyco_Cu-bd"/>
</dbReference>
<dbReference type="InterPro" id="IPR024329">
    <property type="entry name" value="Amyloid_glyco_E2_domain"/>
</dbReference>
<dbReference type="InterPro" id="IPR008154">
    <property type="entry name" value="Amyloid_glyco_extra"/>
</dbReference>
<dbReference type="InterPro" id="IPR015849">
    <property type="entry name" value="Amyloid_glyco_heparin-bd"/>
</dbReference>
<dbReference type="InterPro" id="IPR036454">
    <property type="entry name" value="Amyloid_glyco_heparin-bd_sf"/>
</dbReference>
<dbReference type="InterPro" id="IPR019745">
    <property type="entry name" value="Amyloid_glyco_intracell_CS"/>
</dbReference>
<dbReference type="InterPro" id="IPR019543">
    <property type="entry name" value="APP_amyloid_C"/>
</dbReference>
<dbReference type="InterPro" id="IPR019744">
    <property type="entry name" value="APP_CUBD_CS"/>
</dbReference>
<dbReference type="InterPro" id="IPR036176">
    <property type="entry name" value="E2_sf"/>
</dbReference>
<dbReference type="InterPro" id="IPR002223">
    <property type="entry name" value="Kunitz_BPTI"/>
</dbReference>
<dbReference type="InterPro" id="IPR036880">
    <property type="entry name" value="Kunitz_BPTI_sf"/>
</dbReference>
<dbReference type="InterPro" id="IPR011993">
    <property type="entry name" value="PH-like_dom_sf"/>
</dbReference>
<dbReference type="InterPro" id="IPR020901">
    <property type="entry name" value="Prtase_inh_Kunz-CS"/>
</dbReference>
<dbReference type="PANTHER" id="PTHR23103">
    <property type="entry name" value="ALZHEIMER'S DISEASE BETA-AMYLOID RELATED"/>
    <property type="match status" value="1"/>
</dbReference>
<dbReference type="PANTHER" id="PTHR23103:SF7">
    <property type="entry name" value="AMYLOID-BETA PRECURSOR PROTEIN"/>
    <property type="match status" value="1"/>
</dbReference>
<dbReference type="Pfam" id="PF10515">
    <property type="entry name" value="APP_amyloid"/>
    <property type="match status" value="1"/>
</dbReference>
<dbReference type="Pfam" id="PF12924">
    <property type="entry name" value="APP_Cu_bd"/>
    <property type="match status" value="1"/>
</dbReference>
<dbReference type="Pfam" id="PF12925">
    <property type="entry name" value="APP_E2"/>
    <property type="match status" value="1"/>
</dbReference>
<dbReference type="Pfam" id="PF02177">
    <property type="entry name" value="APP_N"/>
    <property type="match status" value="1"/>
</dbReference>
<dbReference type="Pfam" id="PF03494">
    <property type="entry name" value="Beta-APP"/>
    <property type="match status" value="1"/>
</dbReference>
<dbReference type="Pfam" id="PF00014">
    <property type="entry name" value="Kunitz_BPTI"/>
    <property type="match status" value="1"/>
</dbReference>
<dbReference type="PRINTS" id="PR00203">
    <property type="entry name" value="AMYLOIDA4"/>
</dbReference>
<dbReference type="PRINTS" id="PR00759">
    <property type="entry name" value="BASICPTASE"/>
</dbReference>
<dbReference type="PRINTS" id="PR00204">
    <property type="entry name" value="BETAAMYLOID"/>
</dbReference>
<dbReference type="SMART" id="SM00006">
    <property type="entry name" value="A4_EXTRA"/>
    <property type="match status" value="1"/>
</dbReference>
<dbReference type="SMART" id="SM00131">
    <property type="entry name" value="KU"/>
    <property type="match status" value="1"/>
</dbReference>
<dbReference type="SUPFAM" id="SSF56491">
    <property type="entry name" value="A heparin-binding domain"/>
    <property type="match status" value="1"/>
</dbReference>
<dbReference type="SUPFAM" id="SSF89811">
    <property type="entry name" value="Amyloid beta a4 protein copper binding domain (domain 2)"/>
    <property type="match status" value="1"/>
</dbReference>
<dbReference type="SUPFAM" id="SSF57362">
    <property type="entry name" value="BPTI-like"/>
    <property type="match status" value="1"/>
</dbReference>
<dbReference type="SUPFAM" id="SSF109843">
    <property type="entry name" value="CAPPD, an extracellular domain of amyloid beta A4 protein"/>
    <property type="match status" value="1"/>
</dbReference>
<dbReference type="PROSITE" id="PS00319">
    <property type="entry name" value="APP_CUBD"/>
    <property type="match status" value="1"/>
</dbReference>
<dbReference type="PROSITE" id="PS51869">
    <property type="entry name" value="APP_E1"/>
    <property type="match status" value="1"/>
</dbReference>
<dbReference type="PROSITE" id="PS51870">
    <property type="entry name" value="APP_E2"/>
    <property type="match status" value="1"/>
</dbReference>
<dbReference type="PROSITE" id="PS00320">
    <property type="entry name" value="APP_INTRA"/>
    <property type="match status" value="1"/>
</dbReference>
<dbReference type="PROSITE" id="PS00280">
    <property type="entry name" value="BPTI_KUNITZ_1"/>
    <property type="match status" value="1"/>
</dbReference>
<dbReference type="PROSITE" id="PS50279">
    <property type="entry name" value="BPTI_KUNITZ_2"/>
    <property type="match status" value="1"/>
</dbReference>
<evidence type="ECO:0000250" key="1"/>
<evidence type="ECO:0000250" key="2">
    <source>
        <dbReference type="UniProtKB" id="P05067"/>
    </source>
</evidence>
<evidence type="ECO:0000250" key="3">
    <source>
        <dbReference type="UniProtKB" id="P08592"/>
    </source>
</evidence>
<evidence type="ECO:0000250" key="4">
    <source>
        <dbReference type="UniProtKB" id="P12023"/>
    </source>
</evidence>
<evidence type="ECO:0000255" key="5"/>
<evidence type="ECO:0000255" key="6">
    <source>
        <dbReference type="PROSITE-ProRule" id="PRU00031"/>
    </source>
</evidence>
<evidence type="ECO:0000255" key="7">
    <source>
        <dbReference type="PROSITE-ProRule" id="PRU01217"/>
    </source>
</evidence>
<evidence type="ECO:0000255" key="8">
    <source>
        <dbReference type="PROSITE-ProRule" id="PRU01218"/>
    </source>
</evidence>
<evidence type="ECO:0000256" key="9">
    <source>
        <dbReference type="SAM" id="MobiDB-lite"/>
    </source>
</evidence>
<evidence type="ECO:0000269" key="10">
    <source>
    </source>
</evidence>
<evidence type="ECO:0000269" key="11">
    <source>
    </source>
</evidence>
<evidence type="ECO:0000269" key="12">
    <source>
    </source>
</evidence>
<evidence type="ECO:0000305" key="13"/>
<keyword id="KW-0025">Alternative splicing</keyword>
<keyword id="KW-0034">Amyloid</keyword>
<keyword id="KW-0053">Apoptosis</keyword>
<keyword id="KW-0130">Cell adhesion</keyword>
<keyword id="KW-1003">Cell membrane</keyword>
<keyword id="KW-0966">Cell projection</keyword>
<keyword id="KW-0168">Coated pit</keyword>
<keyword id="KW-0186">Copper</keyword>
<keyword id="KW-0963">Cytoplasm</keyword>
<keyword id="KW-0968">Cytoplasmic vesicle</keyword>
<keyword id="KW-1015">Disulfide bond</keyword>
<keyword id="KW-0254">Endocytosis</keyword>
<keyword id="KW-0256">Endoplasmic reticulum</keyword>
<keyword id="KW-0967">Endosome</keyword>
<keyword id="KW-0325">Glycoprotein</keyword>
<keyword id="KW-0333">Golgi apparatus</keyword>
<keyword id="KW-0358">Heparin-binding</keyword>
<keyword id="KW-0408">Iron</keyword>
<keyword id="KW-1017">Isopeptide bond</keyword>
<keyword id="KW-0472">Membrane</keyword>
<keyword id="KW-0479">Metal-binding</keyword>
<keyword id="KW-0914">Notch signaling pathway</keyword>
<keyword id="KW-0539">Nucleus</keyword>
<keyword id="KW-0597">Phosphoprotein</keyword>
<keyword id="KW-0646">Protease inhibitor</keyword>
<keyword id="KW-0654">Proteoglycan</keyword>
<keyword id="KW-1185">Reference proteome</keyword>
<keyword id="KW-0964">Secreted</keyword>
<keyword id="KW-0722">Serine protease inhibitor</keyword>
<keyword id="KW-0732">Signal</keyword>
<keyword id="KW-0765">Sulfation</keyword>
<keyword id="KW-0812">Transmembrane</keyword>
<keyword id="KW-1133">Transmembrane helix</keyword>
<keyword id="KW-0832">Ubl conjugation</keyword>
<keyword id="KW-0862">Zinc</keyword>
<gene>
    <name evidence="2" type="primary">APP</name>
    <name evidence="2" type="synonym">A4</name>
    <name evidence="2" type="synonym">AD1</name>
</gene>
<accession>Q60495</accession>
<accession>Q60496</accession>
<feature type="signal peptide" evidence="2">
    <location>
        <begin position="1"/>
        <end position="17"/>
    </location>
</feature>
<feature type="chain" id="PRO_0000000076" description="Amyloid-beta precursor protein">
    <location>
        <begin position="18"/>
        <end position="770"/>
    </location>
</feature>
<feature type="chain" id="PRO_0000000077" description="Soluble APP-alpha" evidence="1">
    <location>
        <begin position="18"/>
        <end position="687"/>
    </location>
</feature>
<feature type="chain" id="PRO_0000000078" description="Soluble APP-beta" evidence="1">
    <location>
        <begin position="18"/>
        <end position="671"/>
    </location>
</feature>
<feature type="chain" id="PRO_0000381965" description="N-APP" evidence="1">
    <location>
        <begin position="18"/>
        <end position="286"/>
    </location>
</feature>
<feature type="chain" id="PRO_0000000079" description="C99" evidence="1">
    <location>
        <begin position="672"/>
        <end position="770"/>
    </location>
</feature>
<feature type="chain" id="PRO_0000000080" description="Amyloid-beta protein 42" evidence="2">
    <location>
        <begin position="672"/>
        <end position="713"/>
    </location>
</feature>
<feature type="chain" id="PRO_0000000081" description="Amyloid-beta protein 40" evidence="2">
    <location>
        <begin position="672"/>
        <end position="711"/>
    </location>
</feature>
<feature type="chain" id="PRO_0000000082" description="C83" evidence="1">
    <location>
        <begin position="688"/>
        <end position="770"/>
    </location>
</feature>
<feature type="peptide" id="PRO_0000000083" description="P3(42)" evidence="1">
    <location>
        <begin position="688"/>
        <end position="713"/>
    </location>
</feature>
<feature type="peptide" id="PRO_0000000084" description="P3(40)" evidence="1">
    <location>
        <begin position="688"/>
        <end position="711"/>
    </location>
</feature>
<feature type="chain" id="PRO_0000384573" description="C80">
    <location>
        <begin position="691"/>
        <end position="770"/>
    </location>
</feature>
<feature type="chain" id="PRO_0000000085" description="Gamma-secretase C-terminal fragment 59" evidence="1">
    <location>
        <begin position="712"/>
        <end position="770"/>
    </location>
</feature>
<feature type="chain" id="PRO_0000000086" description="Gamma-secretase C-terminal fragment 57" evidence="1">
    <location>
        <begin position="714"/>
        <end position="770"/>
    </location>
</feature>
<feature type="chain" id="PRO_0000442140" description="Gamma-secretase C-terminal fragment 50" evidence="1">
    <location>
        <begin position="721"/>
        <end position="770"/>
    </location>
</feature>
<feature type="chain" id="PRO_0000000087" description="C31" evidence="1">
    <location>
        <begin position="740"/>
        <end position="770"/>
    </location>
</feature>
<feature type="topological domain" description="Extracellular" evidence="13">
    <location>
        <begin position="18"/>
        <end position="701"/>
    </location>
</feature>
<feature type="transmembrane region" description="Helical" evidence="2">
    <location>
        <begin position="702"/>
        <end position="722"/>
    </location>
</feature>
<feature type="topological domain" description="Cytoplasmic" evidence="13">
    <location>
        <begin position="723"/>
        <end position="770"/>
    </location>
</feature>
<feature type="domain" description="E1" evidence="7">
    <location>
        <begin position="28"/>
        <end position="189"/>
    </location>
</feature>
<feature type="domain" description="BPTI/Kunitz inhibitor" evidence="6">
    <location>
        <begin position="291"/>
        <end position="341"/>
    </location>
</feature>
<feature type="domain" description="E2" evidence="8">
    <location>
        <begin position="374"/>
        <end position="565"/>
    </location>
</feature>
<feature type="region of interest" description="GFLD subdomain" evidence="7">
    <location>
        <begin position="28"/>
        <end position="123"/>
    </location>
</feature>
<feature type="region of interest" description="CuBD subdomain" evidence="7">
    <location>
        <begin position="131"/>
        <end position="189"/>
    </location>
</feature>
<feature type="region of interest" description="Copper-binding" evidence="1">
    <location>
        <begin position="135"/>
        <end position="155"/>
    </location>
</feature>
<feature type="region of interest" description="Zinc-binding" evidence="1">
    <location>
        <begin position="181"/>
        <end position="188"/>
    </location>
</feature>
<feature type="region of interest" description="Disordered" evidence="9">
    <location>
        <begin position="196"/>
        <end position="281"/>
    </location>
</feature>
<feature type="region of interest" description="Heparin-binding" evidence="1">
    <location>
        <begin position="391"/>
        <end position="423"/>
    </location>
</feature>
<feature type="region of interest" description="Heparin-binding" evidence="1">
    <location>
        <begin position="491"/>
        <end position="522"/>
    </location>
</feature>
<feature type="region of interest" description="Collagen-binding" evidence="2">
    <location>
        <begin position="523"/>
        <end position="540"/>
    </location>
</feature>
<feature type="region of interest" description="Interaction with PSEN1" evidence="2">
    <location>
        <begin position="695"/>
        <end position="722"/>
    </location>
</feature>
<feature type="region of interest" description="Interaction with G(o)-alpha" evidence="1">
    <location>
        <begin position="732"/>
        <end position="751"/>
    </location>
</feature>
<feature type="region of interest" description="Required for the interaction with KIF5B and for anterograde transport in axons" evidence="2">
    <location>
        <begin position="756"/>
        <end position="770"/>
    </location>
</feature>
<feature type="short sequence motif" description="OX-2" evidence="2">
    <location>
        <begin position="344"/>
        <end position="365"/>
    </location>
</feature>
<feature type="short sequence motif" description="Basolateral sorting signal">
    <location>
        <begin position="724"/>
        <end position="734"/>
    </location>
</feature>
<feature type="short sequence motif" description="YENPXY motif; contains endocytosis signal" evidence="2">
    <location>
        <begin position="757"/>
        <end position="762"/>
    </location>
</feature>
<feature type="compositionally biased region" description="Acidic residues" evidence="9">
    <location>
        <begin position="196"/>
        <end position="207"/>
    </location>
</feature>
<feature type="compositionally biased region" description="Acidic residues" evidence="9">
    <location>
        <begin position="228"/>
        <end position="264"/>
    </location>
</feature>
<feature type="compositionally biased region" description="Low complexity" evidence="9">
    <location>
        <begin position="268"/>
        <end position="281"/>
    </location>
</feature>
<feature type="binding site" evidence="2">
    <location>
        <begin position="96"/>
        <end position="110"/>
    </location>
    <ligand>
        <name>heparin</name>
        <dbReference type="ChEBI" id="CHEBI:28304"/>
    </ligand>
</feature>
<feature type="binding site" evidence="7">
    <location>
        <position position="147"/>
    </location>
    <ligand>
        <name>Cu(2+)</name>
        <dbReference type="ChEBI" id="CHEBI:29036"/>
        <label>1</label>
    </ligand>
</feature>
<feature type="binding site" evidence="7">
    <location>
        <position position="151"/>
    </location>
    <ligand>
        <name>Cu(2+)</name>
        <dbReference type="ChEBI" id="CHEBI:29036"/>
        <label>1</label>
    </ligand>
</feature>
<feature type="binding site" evidence="7">
    <location>
        <position position="168"/>
    </location>
    <ligand>
        <name>Cu(2+)</name>
        <dbReference type="ChEBI" id="CHEBI:29036"/>
        <label>1</label>
    </ligand>
</feature>
<feature type="binding site" evidence="2">
    <location>
        <position position="183"/>
    </location>
    <ligand>
        <name>Zn(2+)</name>
        <dbReference type="ChEBI" id="CHEBI:29105"/>
        <label>1</label>
    </ligand>
</feature>
<feature type="binding site" evidence="2">
    <location>
        <position position="186"/>
    </location>
    <ligand>
        <name>Zn(2+)</name>
        <dbReference type="ChEBI" id="CHEBI:29105"/>
        <label>1</label>
    </ligand>
</feature>
<feature type="binding site" evidence="2">
    <location>
        <position position="187"/>
    </location>
    <ligand>
        <name>Zn(2+)</name>
        <dbReference type="ChEBI" id="CHEBI:29105"/>
        <label>1</label>
    </ligand>
</feature>
<feature type="binding site" evidence="2">
    <location>
        <position position="677"/>
    </location>
    <ligand>
        <name>Cu(2+)</name>
        <dbReference type="ChEBI" id="CHEBI:29036"/>
        <label>2</label>
    </ligand>
</feature>
<feature type="binding site" evidence="2">
    <location>
        <position position="677"/>
    </location>
    <ligand>
        <name>Zn(2+)</name>
        <dbReference type="ChEBI" id="CHEBI:29105"/>
        <label>2</label>
    </ligand>
</feature>
<feature type="binding site" evidence="2">
    <location>
        <position position="681"/>
    </location>
    <ligand>
        <name>Cu(2+)</name>
        <dbReference type="ChEBI" id="CHEBI:29036"/>
        <label>2</label>
    </ligand>
</feature>
<feature type="binding site" evidence="2">
    <location>
        <position position="681"/>
    </location>
    <ligand>
        <name>Zn(2+)</name>
        <dbReference type="ChEBI" id="CHEBI:29105"/>
        <label>2</label>
    </ligand>
</feature>
<feature type="binding site" evidence="2">
    <location>
        <position position="684"/>
    </location>
    <ligand>
        <name>Cu(2+)</name>
        <dbReference type="ChEBI" id="CHEBI:29036"/>
        <label>2</label>
    </ligand>
</feature>
<feature type="binding site" evidence="2">
    <location>
        <position position="684"/>
    </location>
    <ligand>
        <name>Zn(2+)</name>
        <dbReference type="ChEBI" id="CHEBI:29105"/>
        <label>2</label>
    </ligand>
</feature>
<feature type="binding site" evidence="2">
    <location>
        <position position="685"/>
    </location>
    <ligand>
        <name>Cu(2+)</name>
        <dbReference type="ChEBI" id="CHEBI:29036"/>
        <label>2</label>
    </ligand>
</feature>
<feature type="binding site" evidence="2">
    <location>
        <position position="685"/>
    </location>
    <ligand>
        <name>Zn(2+)</name>
        <dbReference type="ChEBI" id="CHEBI:29105"/>
        <label>2</label>
    </ligand>
</feature>
<feature type="site" description="Required for Cu(2+) reduction" evidence="7">
    <location>
        <position position="170"/>
    </location>
</feature>
<feature type="site" description="Cleavage; by caspases" evidence="2">
    <location>
        <begin position="197"/>
        <end position="198"/>
    </location>
</feature>
<feature type="site" description="Cleavage; by caspases" evidence="2">
    <location>
        <begin position="219"/>
        <end position="220"/>
    </location>
</feature>
<feature type="site" description="Reactive bond" evidence="1">
    <location>
        <begin position="301"/>
        <end position="302"/>
    </location>
</feature>
<feature type="site" description="Cleavage; by beta-secretase" evidence="2">
    <location>
        <begin position="671"/>
        <end position="672"/>
    </location>
</feature>
<feature type="site" description="Cleavage; by ACE" evidence="2">
    <location>
        <begin position="678"/>
        <end position="679"/>
    </location>
</feature>
<feature type="site" description="Cleavage; by alpha-secretase" evidence="3">
    <location>
        <begin position="687"/>
        <end position="688"/>
    </location>
</feature>
<feature type="site" description="Cleavage; by theta-secretase" evidence="3">
    <location>
        <begin position="690"/>
        <end position="691"/>
    </location>
</feature>
<feature type="site" description="Implicated in free radical propagation" evidence="1">
    <location>
        <position position="704"/>
    </location>
</feature>
<feature type="site" description="Susceptible to oxidation" evidence="2">
    <location>
        <position position="706"/>
    </location>
</feature>
<feature type="site" description="Cleavage; by gamma-secretase; site 1" evidence="2">
    <location>
        <begin position="711"/>
        <end position="712"/>
    </location>
</feature>
<feature type="site" description="Cleavage; by gamma-secretase; site 2" evidence="2">
    <location>
        <begin position="713"/>
        <end position="714"/>
    </location>
</feature>
<feature type="site" description="Cleavage; by gamma-secretase; site 3" evidence="2">
    <location>
        <begin position="720"/>
        <end position="721"/>
    </location>
</feature>
<feature type="site" description="Cleavage; by a caspase" evidence="2">
    <location>
        <begin position="739"/>
        <end position="740"/>
    </location>
</feature>
<feature type="modified residue" description="Phosphoserine; by CK2" evidence="2">
    <location>
        <position position="198"/>
    </location>
</feature>
<feature type="modified residue" description="Phosphoserine; by CK1" evidence="2">
    <location>
        <position position="206"/>
    </location>
</feature>
<feature type="modified residue" description="Sulfotyrosine" evidence="5">
    <location>
        <position position="217"/>
    </location>
</feature>
<feature type="modified residue" description="Sulfotyrosine" evidence="5">
    <location>
        <position position="336"/>
    </location>
</feature>
<feature type="modified residue" description="Phosphoserine" evidence="2">
    <location>
        <position position="441"/>
    </location>
</feature>
<feature type="modified residue" description="Phosphotyrosine" evidence="2">
    <location>
        <position position="497"/>
    </location>
</feature>
<feature type="modified residue" description="Phosphothreonine" evidence="3">
    <location>
        <position position="729"/>
    </location>
</feature>
<feature type="modified residue" description="Phosphoserine; by APP-kinase I" evidence="3">
    <location>
        <position position="730"/>
    </location>
</feature>
<feature type="modified residue" description="Phosphothreonine; by CDK5 and MAPK10" evidence="2">
    <location>
        <position position="743"/>
    </location>
</feature>
<feature type="modified residue" description="Phosphotyrosine; by ABL1" evidence="4">
    <location>
        <position position="757"/>
    </location>
</feature>
<feature type="glycosylation site" description="N-linked (GlcNAc...) asparagine" evidence="5">
    <location>
        <position position="542"/>
    </location>
</feature>
<feature type="glycosylation site" description="N-linked (GlcNAc...) asparagine" evidence="5">
    <location>
        <position position="571"/>
    </location>
</feature>
<feature type="glycosylation site" description="O-linked (Xyl...) (chondroitin sulfate) serine" evidence="1">
    <location>
        <position position="656"/>
    </location>
</feature>
<feature type="disulfide bond" evidence="7">
    <location>
        <begin position="38"/>
        <end position="62"/>
    </location>
</feature>
<feature type="disulfide bond" evidence="7">
    <location>
        <begin position="73"/>
        <end position="117"/>
    </location>
</feature>
<feature type="disulfide bond" evidence="7">
    <location>
        <begin position="98"/>
        <end position="105"/>
    </location>
</feature>
<feature type="disulfide bond" evidence="7">
    <location>
        <begin position="133"/>
        <end position="187"/>
    </location>
</feature>
<feature type="disulfide bond" evidence="7">
    <location>
        <begin position="144"/>
        <end position="174"/>
    </location>
</feature>
<feature type="disulfide bond" evidence="7">
    <location>
        <begin position="158"/>
        <end position="186"/>
    </location>
</feature>
<feature type="disulfide bond" evidence="6">
    <location>
        <begin position="291"/>
        <end position="341"/>
    </location>
</feature>
<feature type="disulfide bond" evidence="6">
    <location>
        <begin position="300"/>
        <end position="324"/>
    </location>
</feature>
<feature type="disulfide bond" evidence="6">
    <location>
        <begin position="316"/>
        <end position="337"/>
    </location>
</feature>
<feature type="cross-link" description="Glycyl lysine isopeptide (Lys-Gly) (interchain with G-Cter in ubiquitin)" evidence="3">
    <location>
        <position position="763"/>
    </location>
</feature>
<feature type="splice variant" id="VSP_007221" description="In isoform APP695." evidence="13">
    <original>E</original>
    <variation>V</variation>
    <location>
        <position position="289"/>
    </location>
</feature>
<feature type="splice variant" id="VSP_007222" description="In isoform APP695." evidence="13">
    <location>
        <begin position="290"/>
        <end position="364"/>
    </location>
</feature>
<organism>
    <name type="scientific">Cavia porcellus</name>
    <name type="common">Guinea pig</name>
    <dbReference type="NCBI Taxonomy" id="10141"/>
    <lineage>
        <taxon>Eukaryota</taxon>
        <taxon>Metazoa</taxon>
        <taxon>Chordata</taxon>
        <taxon>Craniata</taxon>
        <taxon>Vertebrata</taxon>
        <taxon>Euteleostomi</taxon>
        <taxon>Mammalia</taxon>
        <taxon>Eutheria</taxon>
        <taxon>Euarchontoglires</taxon>
        <taxon>Glires</taxon>
        <taxon>Rodentia</taxon>
        <taxon>Hystricomorpha</taxon>
        <taxon>Caviidae</taxon>
        <taxon>Cavia</taxon>
    </lineage>
</organism>
<comment type="function">
    <text evidence="1 2">Functions as a cell surface receptor and performs physiological functions on the surface of neurons relevant to neurite growth, neuronal adhesion and axonogenesis. Interaction between APP molecules on neighboring cells promotes synaptogenesis. Involved in cell mobility and transcription regulation through protein-protein interactions (By similarity). Can promote transcription activation through binding to APBB1-KAT5 and inhibit Notch signaling through interaction with Numb (By similarity). Couples to apoptosis-inducing pathways such as those mediated by G(o) and JIP (By similarity). Inhibits G(o)-alpha ATPase activity (By similarity). Acts as a kinesin I membrane receptor, mediating the axonal transport of beta-secretase and presenilin 1 (By similarity). By acting as a kinesin I membrane receptor, plays a role in axonal anterograde transport of cargo towards synapses in axons (By similarity). May be involved in copper homeostasis/oxidative stress through copper ion reduction (By similarity). In vitro, copper-metallated APP induces neuronal death directly or is potentiated through Cu(2+)-mediated low-density lipoprotein oxidation (By similarity). Can regulate neurite outgrowth through binding to components of the extracellular matrix such as heparin and collagen I and IV. Induces a AGER-dependent pathway that involves activation of p38 MAPK, resulting in internalization of amyloid-beta peptide and mitochondrial dysfunction in cultured cortical neurons. Provides Cu(2+) ions for GPC1 which are required for release of nitric oxide (NO) and subsequent degradation of the heparan sulfate chains on GPC1 (By similarity).</text>
</comment>
<comment type="function">
    <text evidence="1">Amyloid-beta peptides are lipophilic metal chelators with metal-reducing activity. Binds transient metals such as copper, zinc and iron. Amyloid-beta peptides bind to lipoproteins and apolipoproteins E and J in the CSF and to HDL particles in plasma, inhibiting metal-catalyzed oxidation of lipoproteins. Also bind GPC1 in lipid rafts (By similarity).</text>
</comment>
<comment type="function">
    <text evidence="1">Appicans elicit adhesion of neural cells to the extracellular matrix and may regulate neurite outgrowth in the brain.</text>
</comment>
<comment type="function">
    <text evidence="1">The gamma-CTF peptides as well as the caspase-cleaved peptides, including C31, are potent enhancers of neuronal apoptosis.</text>
</comment>
<comment type="subunit">
    <text evidence="2 3 4 12">Binds, via its C-terminus, to the PID domain of several cytoplasmic proteins, including APBB family members, the APBA family, MAPK8IP1, SHC1 and NUMB and DAB1 (By similarity). Binding to DAB1 inhibits its serine phosphorylation (By similarity). Interacts (via NPXY motif) with DAB2 (via PID domain); the interaction is impaired by tyrosine phosphorylation of the NPXY motif. Also interacts with GPCR-like protein BPP, APPBP1, IB1, KNS2 (via its TPR domains), APPBP2 (via BaSS) and DDB1. In vitro, it binds MAPT via the MT-binding domains (By similarity). Associates with microtubules in the presence of ATP and in a kinesin-dependent manner (By similarity). Interacts, through a C-terminal domain, with GNAO1. Amyloid-beta protein 42 binds CHRNA7 in hippocampal neurons (By similarity). Amyloid-beta associates with HADH2 (By similarity). Interacts with CPEB1, ANKS1B and AGER (By similarity). Interacts with ITM2B. Interacts with ITM2C. Interacts with IDE. Can form homodimers; dimerization is enhanced in the presence of Cu(2+) ions. Can form homodimers; this is promoted by heparin binding (By similarity). Amyloid-beta protein 40 interacts with S100A9 (By similarity). CTF-alpha product of APP interacts with GSAP (By similarity). Isoform APP695 interacts with SORL1 (via N-terminal ectodomain); this interaction retains APP in the trans-Golgi network and reduces processing into soluble APP-alpha and amyloid-beta peptides (By similarity). Isoform APP770 interacts with SORL1 (By similarity). The C99 fragment also interacts with SORL1 (By similarity). Interacts with PLD3 (By similarity). Interacts with VDAC1 (By similarity). Interacts with NSG1; could regulate APP processing (By similarity). Amyloid-beta protein 42 interacts with FPR2 (By similarity). Interacts (via transmembrane region) with PSEN1; the interaction is direct (By similarity). Interacts with LRRK2 (By similarity). Interacts (via cytoplasmic domain) with KIF5B (By similarity). Interacts (via C-terminus) with APBB2/FE65L1 (via C-terminus) (By similarity). Interacts (via intracellular domain) with APBB3 (By similarity).</text>
</comment>
<comment type="subcellular location">
    <subcellularLocation>
        <location evidence="2">Cell membrane</location>
        <topology evidence="2">Single-pass type I membrane protein</topology>
    </subcellularLocation>
    <subcellularLocation>
        <location evidence="2">Membrane</location>
        <topology evidence="2">Single-pass type I membrane protein</topology>
    </subcellularLocation>
    <subcellularLocation>
        <location evidence="2">Perikaryon</location>
    </subcellularLocation>
    <subcellularLocation>
        <location evidence="2">Cell projection</location>
        <location evidence="2">Growth cone</location>
    </subcellularLocation>
    <subcellularLocation>
        <location evidence="2">Membrane</location>
        <location evidence="2">Clathrin-coated pit</location>
    </subcellularLocation>
    <subcellularLocation>
        <location evidence="2">Early endosome</location>
    </subcellularLocation>
    <subcellularLocation>
        <location evidence="2">Cytoplasmic vesicle</location>
    </subcellularLocation>
    <text evidence="2">Cell surface protein that rapidly becomes internalized via clathrin-coated pits. Only a minor proportion is present at the cell membrane; most of the protein is present in intracellular vesicles. During maturation, the immature APP (N-glycosylated in the endoplasmic reticulum) moves to the Golgi complex where complete maturation occurs (O-glycosylated and sulfated). After alpha-secretase cleavage, soluble APP is released into the extracellular space and the C-terminal is internalized to endosomes and lysosomes. Some APP accumulates in secretory transport vesicles leaving the late Golgi compartment and returns to the cell surface. APP sorts to the basolateral surface in epithelial cells. During neuronal differentiation, the Thr-743 phosphorylated form is located mainly in growth cones, moderately in neurites and sparingly in the cell body. Casein kinase phosphorylation can occur either at the cell surface or within a post-Golgi compartment. Associates with GPC1 in perinuclear compartments. Colocalizes with SORL1 in a vesicular pattern in cytoplasm and perinuclear regions.</text>
</comment>
<comment type="subcellular location">
    <molecule>C83</molecule>
    <subcellularLocation>
        <location evidence="2">Endoplasmic reticulum</location>
    </subcellularLocation>
    <subcellularLocation>
        <location evidence="2">Golgi apparatus</location>
    </subcellularLocation>
    <subcellularLocation>
        <location evidence="2">Early endosome</location>
    </subcellularLocation>
</comment>
<comment type="subcellular location">
    <molecule>C99</molecule>
    <subcellularLocation>
        <location evidence="2">Early endosome</location>
    </subcellularLocation>
</comment>
<comment type="subcellular location">
    <molecule>Soluble APP-beta</molecule>
    <subcellularLocation>
        <location evidence="2">Secreted</location>
    </subcellularLocation>
</comment>
<comment type="subcellular location">
    <molecule>Amyloid-beta protein 42</molecule>
    <subcellularLocation>
        <location evidence="2">Cell surface</location>
    </subcellularLocation>
    <text evidence="2">Associates with FPR2 at the cell surface and the complex is then rapidly internalized.</text>
</comment>
<comment type="subcellular location">
    <molecule>Gamma-secretase C-terminal fragment 59</molecule>
    <subcellularLocation>
        <location evidence="2">Nucleus</location>
    </subcellularLocation>
    <subcellularLocation>
        <location evidence="2">Cytoplasm</location>
    </subcellularLocation>
    <text evidence="2 4">Located to both the cytoplasm and nuclei of neurons. It can be translocated to the nucleus through association with APBB1 (Fe65) (By similarity). In dopaminergic neurons, the phosphorylated Thr-743 form is localized to the nucleus (By similarity).</text>
</comment>
<comment type="alternative products">
    <event type="alternative splicing"/>
    <isoform>
        <id>Q60495-1</id>
        <name>APP770</name>
        <sequence type="displayed"/>
    </isoform>
    <isoform>
        <id>Q60495-2</id>
        <name>APP695</name>
        <sequence type="described" ref="VSP_007221 VSP_007222"/>
    </isoform>
    <text>Additional isoforms, missing exons 7,8 and 15, seem to exist. The L-isoforms, missing exon 15, are referred to as appicans.</text>
</comment>
<comment type="tissue specificity">
    <text>Isoform APP695 is the major isoform found in brain. The longer isoforms containing the BPTI domain are predominantly expressed in peripheral organs such as muscle and liver.</text>
</comment>
<comment type="induction">
    <text>Increased levels during neuronal differentiation.</text>
</comment>
<comment type="domain">
    <text evidence="2">The transmembrane helix undergoes a conformation change and unravels partially when bound to PSEN1, facilitating cleavage by PSEN1.</text>
</comment>
<comment type="domain">
    <text evidence="2">The basolateral sorting signal (BaSS) is required for sorting of membrane proteins to the basolateral surface of epithelial cells.</text>
</comment>
<comment type="domain">
    <text evidence="2">The GFLD subdomain binds Cu(2+) ions; this promotes homodimerization.</text>
</comment>
<comment type="domain">
    <text evidence="2">The NPXY sequence motif found in many tyrosine-phosphorylated proteins is required for the specific binding of the PID domain. However, additional amino acids either N- or C-terminal to the NPXY motif are often required for complete interaction. The PID domain-containing proteins which bind APP require the YENPTY motif for full interaction. These interactions are independent of phosphorylation on the terminal tyrosine residue. The YENPXY site is also involved in clathrin-mediated endocytosis.</text>
</comment>
<comment type="domain">
    <text evidence="2">The C-terminal region can bind zinc ions; this favors dimerization and formation of higher oligomers.</text>
</comment>
<comment type="domain">
    <text evidence="2">The OX-2 motif shows some similarity to a region in the N-terminus of CD200/MOX2.</text>
</comment>
<comment type="PTM">
    <text evidence="2 10 11">Proteolytically processed under normal cellular conditions (PubMed:10619481, PubMed:11035007). Cleavage either by alpha-secretase, beta-secretase or theta-secretase leads to generation and extracellular release of soluble APP peptides, S-APP-alpha and S-APP-beta, and the retention of corresponding membrane-anchored C-terminal fragments, C80, C83 and C99 (PubMed:10619481, PubMed:11035007). Subsequent processing of C80 and C83 by gamma-secretase yields P3 peptides. This is the major secretory pathway and is non-amyloidogenic. Alternatively, presenilin/nicastrin-mediated gamma-secretase processing of C99 releases the amyloid-beta proteins, amyloid-beta protein 40 and amyloid-beta protein 42, major components of amyloid plaques, and the cytotoxic C-terminal fragments, gamma-CTF(50), gamma-CTF(57) and gamma-CTF(59). PSEN1 cleavage is more efficient with C83 than with C99 as substrate (in vitro). Amyloid-beta protein 40 and Amyloid-beta protein 42 are cleaved by ACE. Many other minor amyloid-beta peptides, amyloid-beta 1-X peptides, are found in cerebral spinal fluid (CSF) including the amyloid-beta X-15 peptides, produced from the cleavage by alpha-secretase (By similarity).</text>
</comment>
<comment type="PTM">
    <text evidence="2">Proteolytically cleaved by caspases during neuronal apoptosis. Cleavage at Asp-739 by either CASP6, CASP8 or CASP9 results in the production of the neurotoxic C31 peptide and the increased production of amyloid-beta peptides.</text>
</comment>
<comment type="PTM">
    <text evidence="2">N- and O-glycosylated.</text>
</comment>
<comment type="PTM">
    <text evidence="2 10 11">Phosphorylation in the C-terminal on tyrosine, threonine and serine residues is neuron-specific (By similarity). Phosphorylation can affect APP processing, neuronal differentiation and interaction with other proteins (PubMed:10619481, PubMed:11035007). Phosphorylated on Thr-743 in neuronal cells by Cdc5 kinase and Mapk10, in dividing cells by Cdc2 kinase in a cell-cycle dependent manner with maximal levels at the G2/M phase and, in vitro, by GSK-3-beta (By similarity). The Thr-743 phosphorylated form causes a conformational change which reduces binding of Fe65 family members (By similarity). In dopaminergic (DA) neurons, phosphorylation on Thr-743 by LRKK2 promotes the production and the nuclear translocation of the APP intracellular domain (AICD) which induces DA neuron apoptosis (By similarity). Phosphorylation on Tyr-757 is required for SHC binding. Phosphorylated in the extracellular domain by casein kinases on both soluble and membrane-bound APP (By similarity). This phosphorylation is inhibited by heparin (By similarity).</text>
</comment>
<comment type="PTM">
    <text evidence="1">N- and O-glycosylated. O-linkage of chondroitin sulfate to the L-APP isoforms produces the APP proteoglycan core proteins, the appicans (By similarity).</text>
</comment>
<comment type="PTM">
    <text evidence="1">Extracellular binding and reduction of copper, results in a corresponding oxidation of Cys-144 and Cys-158, and the formation of a disulfide bond.</text>
</comment>
<comment type="PTM">
    <text evidence="1">Trophic-factor deprivation triggers the cleavage of surface APP by beta-secretase to release sAPP-beta which is further cleaved to release an N-terminal fragment of APP (N-APP).</text>
</comment>
<comment type="PTM">
    <text evidence="4">Amyloid-beta peptides are degraded by IDE.</text>
</comment>
<comment type="PTM">
    <text evidence="2">Sulfated on tyrosine residues.</text>
</comment>
<comment type="miscellaneous">
    <text evidence="2">Chelation of metal ions, notably copper, iron and zinc, can induce histidine-bridging between amyloid-beta molecules resulting in amyloid-beta-metal aggregates. Extracellular zinc-binding increases binding of heparin to APP and inhibits collagen-binding.</text>
</comment>
<comment type="similarity">
    <text evidence="7">Belongs to the APP family.</text>
</comment>
<name>A4_CAVPO</name>